<protein>
    <recommendedName>
        <fullName evidence="6">Protein IQ-DOMAIN 13</fullName>
        <shortName evidence="6">AtIQD13</shortName>
    </recommendedName>
</protein>
<name>IQD13_ARATH</name>
<feature type="chain" id="PRO_0000453120" description="Protein IQ-DOMAIN 13">
    <location>
        <begin position="1"/>
        <end position="517"/>
    </location>
</feature>
<feature type="domain" description="IQ 1" evidence="2">
    <location>
        <begin position="168"/>
        <end position="196"/>
    </location>
</feature>
<feature type="domain" description="IQ 2" evidence="2">
    <location>
        <begin position="197"/>
        <end position="218"/>
    </location>
</feature>
<feature type="region of interest" description="Disordered" evidence="3">
    <location>
        <begin position="1"/>
        <end position="60"/>
    </location>
</feature>
<feature type="region of interest" description="Calmodulin-binding" evidence="6">
    <location>
        <begin position="1"/>
        <end position="11"/>
    </location>
</feature>
<feature type="region of interest" description="Disordered" evidence="3">
    <location>
        <begin position="81"/>
        <end position="147"/>
    </location>
</feature>
<feature type="region of interest" description="Disordered" evidence="3">
    <location>
        <begin position="324"/>
        <end position="407"/>
    </location>
</feature>
<feature type="region of interest" description="Disordered" evidence="3">
    <location>
        <begin position="425"/>
        <end position="452"/>
    </location>
</feature>
<feature type="compositionally biased region" description="Basic residues" evidence="3">
    <location>
        <begin position="40"/>
        <end position="49"/>
    </location>
</feature>
<feature type="compositionally biased region" description="Polar residues" evidence="3">
    <location>
        <begin position="89"/>
        <end position="99"/>
    </location>
</feature>
<feature type="compositionally biased region" description="Pro residues" evidence="3">
    <location>
        <begin position="134"/>
        <end position="144"/>
    </location>
</feature>
<feature type="compositionally biased region" description="Low complexity" evidence="3">
    <location>
        <begin position="328"/>
        <end position="342"/>
    </location>
</feature>
<feature type="compositionally biased region" description="Polar residues" evidence="3">
    <location>
        <begin position="343"/>
        <end position="367"/>
    </location>
</feature>
<feature type="compositionally biased region" description="Basic and acidic residues" evidence="3">
    <location>
        <begin position="432"/>
        <end position="448"/>
    </location>
</feature>
<comment type="function">
    <text evidence="1 5">May be involved in cooperative interactions with calmodulins or calmodulin-like proteins (By similarity). Recruits calmodulin proteins to microtubules, thus being a potential scaffold in cellular signaling and trafficking (By similarity). Regulates the formation of oval xylem secondary cell-wall deposition pits through microtubule-dependent lateral inhibition of Rho GTPase domains, thus confining the area of active ROP domains within the lattice of the cortical microtubules (PubMed:28803875). May associate with nucleic acids and regulate gene expression at the transcriptional or post-transcriptional level (By similarity).</text>
</comment>
<comment type="subunit">
    <text evidence="1">Binds to multiple calmodulin (CaM) in the presence of Ca(2+) and CaM-like proteins.</text>
</comment>
<comment type="subcellular location">
    <subcellularLocation>
        <location evidence="4 5">Cell membrane</location>
    </subcellularLocation>
    <subcellularLocation>
        <location evidence="4 5">Cytoplasm</location>
        <location evidence="4 5">Cytoskeleton</location>
    </subcellularLocation>
    <text evidence="4 5">Recruits calmodulin (CaM2) to microtubules (PubMed:28115582). Associates with cortical microtubules and the plasma membrane to laterally restrict the localization of ROP GTPase domains (PubMed:28803875).</text>
</comment>
<comment type="tissue specificity">
    <text evidence="5">Expressed in vessels of roots, cotyledons and leaves, as well as in trichomes.</text>
</comment>
<comment type="developmental stage">
    <text evidence="5">In roots, mostly localized to microtubule-like filaments beneath the secondary cell walls of metaxylem cells.</text>
</comment>
<comment type="disruption phenotype">
    <text evidence="5">Formation of abnormally large and round secondary cell-wall pits in roots metaxylem vessels (PubMed:28803875). The double mutant iqd13 iqd14 exhibits larger secondary cell-wall pits (PubMed:28803875).</text>
</comment>
<comment type="similarity">
    <text evidence="7">Belongs to the IQD family.</text>
</comment>
<accession>Q9M199</accession>
<keyword id="KW-0112">Calmodulin-binding</keyword>
<keyword id="KW-1003">Cell membrane</keyword>
<keyword id="KW-0963">Cytoplasm</keyword>
<keyword id="KW-0206">Cytoskeleton</keyword>
<keyword id="KW-0472">Membrane</keyword>
<keyword id="KW-1185">Reference proteome</keyword>
<keyword id="KW-0677">Repeat</keyword>
<dbReference type="EMBL" id="AL138659">
    <property type="protein sequence ID" value="CAB75466.1"/>
    <property type="molecule type" value="Genomic_DNA"/>
</dbReference>
<dbReference type="EMBL" id="CP002686">
    <property type="protein sequence ID" value="AEE79956.1"/>
    <property type="molecule type" value="Genomic_DNA"/>
</dbReference>
<dbReference type="EMBL" id="CP002686">
    <property type="protein sequence ID" value="ANM64846.1"/>
    <property type="molecule type" value="Genomic_DNA"/>
</dbReference>
<dbReference type="EMBL" id="AY128329">
    <property type="protein sequence ID" value="AAM91532.1"/>
    <property type="molecule type" value="mRNA"/>
</dbReference>
<dbReference type="EMBL" id="BT001176">
    <property type="protein sequence ID" value="AAN65063.1"/>
    <property type="molecule type" value="mRNA"/>
</dbReference>
<dbReference type="PIR" id="T49310">
    <property type="entry name" value="T49310"/>
</dbReference>
<dbReference type="RefSeq" id="NP_001326850.1">
    <property type="nucleotide sequence ID" value="NM_001339994.1"/>
</dbReference>
<dbReference type="RefSeq" id="NP_191528.1">
    <property type="nucleotide sequence ID" value="NM_115831.3"/>
</dbReference>
<dbReference type="SMR" id="Q9M199"/>
<dbReference type="FunCoup" id="Q9M199">
    <property type="interactions" value="473"/>
</dbReference>
<dbReference type="STRING" id="3702.Q9M199"/>
<dbReference type="GlyGen" id="Q9M199">
    <property type="glycosylation" value="1 site"/>
</dbReference>
<dbReference type="iPTMnet" id="Q9M199"/>
<dbReference type="PaxDb" id="3702-AT3G59690.1"/>
<dbReference type="ProteomicsDB" id="185832"/>
<dbReference type="EnsemblPlants" id="AT3G59690.1">
    <property type="protein sequence ID" value="AT3G59690.1"/>
    <property type="gene ID" value="AT3G59690"/>
</dbReference>
<dbReference type="EnsemblPlants" id="AT3G59690.2">
    <property type="protein sequence ID" value="AT3G59690.2"/>
    <property type="gene ID" value="AT3G59690"/>
</dbReference>
<dbReference type="GeneID" id="825138"/>
<dbReference type="Gramene" id="AT3G59690.1">
    <property type="protein sequence ID" value="AT3G59690.1"/>
    <property type="gene ID" value="AT3G59690"/>
</dbReference>
<dbReference type="Gramene" id="AT3G59690.2">
    <property type="protein sequence ID" value="AT3G59690.2"/>
    <property type="gene ID" value="AT3G59690"/>
</dbReference>
<dbReference type="KEGG" id="ath:AT3G59690"/>
<dbReference type="Araport" id="AT3G59690"/>
<dbReference type="TAIR" id="AT3G59690">
    <property type="gene designation" value="IQD13"/>
</dbReference>
<dbReference type="eggNOG" id="ENOG502R9C0">
    <property type="taxonomic scope" value="Eukaryota"/>
</dbReference>
<dbReference type="HOGENOM" id="CLU_025762_0_0_1"/>
<dbReference type="InParanoid" id="Q9M199"/>
<dbReference type="OMA" id="ERMDRTP"/>
<dbReference type="PhylomeDB" id="Q9M199"/>
<dbReference type="PRO" id="PR:Q9M199"/>
<dbReference type="Proteomes" id="UP000006548">
    <property type="component" value="Chromosome 3"/>
</dbReference>
<dbReference type="ExpressionAtlas" id="Q9M199">
    <property type="expression patterns" value="baseline and differential"/>
</dbReference>
<dbReference type="GO" id="GO:0055028">
    <property type="term" value="C:cortical microtubule"/>
    <property type="evidence" value="ECO:0000314"/>
    <property type="project" value="UniProtKB"/>
</dbReference>
<dbReference type="GO" id="GO:0005886">
    <property type="term" value="C:plasma membrane"/>
    <property type="evidence" value="ECO:0000314"/>
    <property type="project" value="UniProtKB"/>
</dbReference>
<dbReference type="GO" id="GO:0005516">
    <property type="term" value="F:calmodulin binding"/>
    <property type="evidence" value="ECO:0007669"/>
    <property type="project" value="UniProtKB-KW"/>
</dbReference>
<dbReference type="GO" id="GO:0009834">
    <property type="term" value="P:plant-type secondary cell wall biogenesis"/>
    <property type="evidence" value="ECO:0000315"/>
    <property type="project" value="UniProtKB"/>
</dbReference>
<dbReference type="GO" id="GO:2000652">
    <property type="term" value="P:regulation of secondary cell wall biogenesis"/>
    <property type="evidence" value="ECO:0000315"/>
    <property type="project" value="UniProtKB"/>
</dbReference>
<dbReference type="GO" id="GO:0051592">
    <property type="term" value="P:response to calcium ion"/>
    <property type="evidence" value="ECO:0000270"/>
    <property type="project" value="TAIR"/>
</dbReference>
<dbReference type="GO" id="GO:0010089">
    <property type="term" value="P:xylem development"/>
    <property type="evidence" value="ECO:0000315"/>
    <property type="project" value="UniProtKB"/>
</dbReference>
<dbReference type="CDD" id="cd23767">
    <property type="entry name" value="IQCD"/>
    <property type="match status" value="1"/>
</dbReference>
<dbReference type="Gene3D" id="1.20.5.190">
    <property type="match status" value="1"/>
</dbReference>
<dbReference type="InterPro" id="IPR025064">
    <property type="entry name" value="DUF4005"/>
</dbReference>
<dbReference type="InterPro" id="IPR000048">
    <property type="entry name" value="IQ_motif_EF-hand-BS"/>
</dbReference>
<dbReference type="PANTHER" id="PTHR32295">
    <property type="entry name" value="IQ-DOMAIN 5-RELATED"/>
    <property type="match status" value="1"/>
</dbReference>
<dbReference type="PANTHER" id="PTHR32295:SF232">
    <property type="entry name" value="PROTEIN IQ-DOMAIN 13"/>
    <property type="match status" value="1"/>
</dbReference>
<dbReference type="Pfam" id="PF13178">
    <property type="entry name" value="DUF4005"/>
    <property type="match status" value="1"/>
</dbReference>
<dbReference type="Pfam" id="PF00612">
    <property type="entry name" value="IQ"/>
    <property type="match status" value="1"/>
</dbReference>
<dbReference type="SMART" id="SM00015">
    <property type="entry name" value="IQ"/>
    <property type="match status" value="1"/>
</dbReference>
<dbReference type="PROSITE" id="PS50096">
    <property type="entry name" value="IQ"/>
    <property type="match status" value="2"/>
</dbReference>
<sequence length="517" mass="58505">MGKKGSWFSAIKRVFTPHSKEKQLSNNNQEPEIKSENKEKKKKGFGKKLRNGETNSFLPIFRQPSSIEKILSEAEREHNLVFRPPTPTDRANSSSTSVASPLVRPASPKVPSQRYVSSPKPISPRVAYPQVHYPKPPSPKPPSPRAVSPRIVQRREFVHRPEPSLLVKNAYAIKIQAAFRGYMARRSFRALKGLVRLQGVVRGHSVKRQTMNAMKYMQLLVRVQTQVQSRRIQMLENRARNDKDDTKLVSSRMSDDWDDSVLTKEEKDVRLHRKIDAMIKRERSMAYAYSHQLWKNSPKSAQDIRTSGFPLWWNWVDRQKNQNQPFRLTPTRPSLSPQPQSSNQNHFRLNNSFDTSTPNSSKSTFVTPSRPIHTPQPYSSSVSRYSRGGGRATQDSPFKDDDSLTSCPPFSAPSYMAPTVSAKAKLRANSNPKERMDRTPVSTNEKRRSSFPLGSFKWNKGSLFMSNNSNNKGPGSSSSGAVVLEKHKTLKSVGNLSIDSTVSMPATIGRRAFNRFA</sequence>
<organism>
    <name type="scientific">Arabidopsis thaliana</name>
    <name type="common">Mouse-ear cress</name>
    <dbReference type="NCBI Taxonomy" id="3702"/>
    <lineage>
        <taxon>Eukaryota</taxon>
        <taxon>Viridiplantae</taxon>
        <taxon>Streptophyta</taxon>
        <taxon>Embryophyta</taxon>
        <taxon>Tracheophyta</taxon>
        <taxon>Spermatophyta</taxon>
        <taxon>Magnoliopsida</taxon>
        <taxon>eudicotyledons</taxon>
        <taxon>Gunneridae</taxon>
        <taxon>Pentapetalae</taxon>
        <taxon>rosids</taxon>
        <taxon>malvids</taxon>
        <taxon>Brassicales</taxon>
        <taxon>Brassicaceae</taxon>
        <taxon>Camelineae</taxon>
        <taxon>Arabidopsis</taxon>
    </lineage>
</organism>
<evidence type="ECO:0000250" key="1">
    <source>
        <dbReference type="UniProtKB" id="Q9SF32"/>
    </source>
</evidence>
<evidence type="ECO:0000255" key="2">
    <source>
        <dbReference type="PROSITE-ProRule" id="PRU00116"/>
    </source>
</evidence>
<evidence type="ECO:0000256" key="3">
    <source>
        <dbReference type="SAM" id="MobiDB-lite"/>
    </source>
</evidence>
<evidence type="ECO:0000269" key="4">
    <source>
    </source>
</evidence>
<evidence type="ECO:0000269" key="5">
    <source>
    </source>
</evidence>
<evidence type="ECO:0000303" key="6">
    <source>
    </source>
</evidence>
<evidence type="ECO:0000305" key="7"/>
<evidence type="ECO:0000312" key="8">
    <source>
        <dbReference type="Araport" id="AT3G59690"/>
    </source>
</evidence>
<evidence type="ECO:0000312" key="9">
    <source>
        <dbReference type="EMBL" id="CAB75466.1"/>
    </source>
</evidence>
<gene>
    <name evidence="6" type="primary">IQD13</name>
    <name evidence="8" type="ordered locus">At3g59690</name>
    <name evidence="9" type="ORF">T16L24.240</name>
</gene>
<reference key="1">
    <citation type="journal article" date="2000" name="Nature">
        <title>Sequence and analysis of chromosome 3 of the plant Arabidopsis thaliana.</title>
        <authorList>
            <person name="Salanoubat M."/>
            <person name="Lemcke K."/>
            <person name="Rieger M."/>
            <person name="Ansorge W."/>
            <person name="Unseld M."/>
            <person name="Fartmann B."/>
            <person name="Valle G."/>
            <person name="Bloecker H."/>
            <person name="Perez-Alonso M."/>
            <person name="Obermaier B."/>
            <person name="Delseny M."/>
            <person name="Boutry M."/>
            <person name="Grivell L.A."/>
            <person name="Mache R."/>
            <person name="Puigdomenech P."/>
            <person name="De Simone V."/>
            <person name="Choisne N."/>
            <person name="Artiguenave F."/>
            <person name="Robert C."/>
            <person name="Brottier P."/>
            <person name="Wincker P."/>
            <person name="Cattolico L."/>
            <person name="Weissenbach J."/>
            <person name="Saurin W."/>
            <person name="Quetier F."/>
            <person name="Schaefer M."/>
            <person name="Mueller-Auer S."/>
            <person name="Gabel C."/>
            <person name="Fuchs M."/>
            <person name="Benes V."/>
            <person name="Wurmbach E."/>
            <person name="Drzonek H."/>
            <person name="Erfle H."/>
            <person name="Jordan N."/>
            <person name="Bangert S."/>
            <person name="Wiedelmann R."/>
            <person name="Kranz H."/>
            <person name="Voss H."/>
            <person name="Holland R."/>
            <person name="Brandt P."/>
            <person name="Nyakatura G."/>
            <person name="Vezzi A."/>
            <person name="D'Angelo M."/>
            <person name="Pallavicini A."/>
            <person name="Toppo S."/>
            <person name="Simionati B."/>
            <person name="Conrad A."/>
            <person name="Hornischer K."/>
            <person name="Kauer G."/>
            <person name="Loehnert T.-H."/>
            <person name="Nordsiek G."/>
            <person name="Reichelt J."/>
            <person name="Scharfe M."/>
            <person name="Schoen O."/>
            <person name="Bargues M."/>
            <person name="Terol J."/>
            <person name="Climent J."/>
            <person name="Navarro P."/>
            <person name="Collado C."/>
            <person name="Perez-Perez A."/>
            <person name="Ottenwaelder B."/>
            <person name="Duchemin D."/>
            <person name="Cooke R."/>
            <person name="Laudie M."/>
            <person name="Berger-Llauro C."/>
            <person name="Purnelle B."/>
            <person name="Masuy D."/>
            <person name="de Haan M."/>
            <person name="Maarse A.C."/>
            <person name="Alcaraz J.-P."/>
            <person name="Cottet A."/>
            <person name="Casacuberta E."/>
            <person name="Monfort A."/>
            <person name="Argiriou A."/>
            <person name="Flores M."/>
            <person name="Liguori R."/>
            <person name="Vitale D."/>
            <person name="Mannhaupt G."/>
            <person name="Haase D."/>
            <person name="Schoof H."/>
            <person name="Rudd S."/>
            <person name="Zaccaria P."/>
            <person name="Mewes H.-W."/>
            <person name="Mayer K.F.X."/>
            <person name="Kaul S."/>
            <person name="Town C.D."/>
            <person name="Koo H.L."/>
            <person name="Tallon L.J."/>
            <person name="Jenkins J."/>
            <person name="Rooney T."/>
            <person name="Rizzo M."/>
            <person name="Walts A."/>
            <person name="Utterback T."/>
            <person name="Fujii C.Y."/>
            <person name="Shea T.P."/>
            <person name="Creasy T.H."/>
            <person name="Haas B."/>
            <person name="Maiti R."/>
            <person name="Wu D."/>
            <person name="Peterson J."/>
            <person name="Van Aken S."/>
            <person name="Pai G."/>
            <person name="Militscher J."/>
            <person name="Sellers P."/>
            <person name="Gill J.E."/>
            <person name="Feldblyum T.V."/>
            <person name="Preuss D."/>
            <person name="Lin X."/>
            <person name="Nierman W.C."/>
            <person name="Salzberg S.L."/>
            <person name="White O."/>
            <person name="Venter J.C."/>
            <person name="Fraser C.M."/>
            <person name="Kaneko T."/>
            <person name="Nakamura Y."/>
            <person name="Sato S."/>
            <person name="Kato T."/>
            <person name="Asamizu E."/>
            <person name="Sasamoto S."/>
            <person name="Kimura T."/>
            <person name="Idesawa K."/>
            <person name="Kawashima K."/>
            <person name="Kishida Y."/>
            <person name="Kiyokawa C."/>
            <person name="Kohara M."/>
            <person name="Matsumoto M."/>
            <person name="Matsuno A."/>
            <person name="Muraki A."/>
            <person name="Nakayama S."/>
            <person name="Nakazaki N."/>
            <person name="Shinpo S."/>
            <person name="Takeuchi C."/>
            <person name="Wada T."/>
            <person name="Watanabe A."/>
            <person name="Yamada M."/>
            <person name="Yasuda M."/>
            <person name="Tabata S."/>
        </authorList>
    </citation>
    <scope>NUCLEOTIDE SEQUENCE [LARGE SCALE GENOMIC DNA]</scope>
    <source>
        <strain>cv. Columbia</strain>
    </source>
</reference>
<reference key="2">
    <citation type="journal article" date="2017" name="Plant J.">
        <title>Araport11: a complete reannotation of the Arabidopsis thaliana reference genome.</title>
        <authorList>
            <person name="Cheng C.Y."/>
            <person name="Krishnakumar V."/>
            <person name="Chan A.P."/>
            <person name="Thibaud-Nissen F."/>
            <person name="Schobel S."/>
            <person name="Town C.D."/>
        </authorList>
    </citation>
    <scope>GENOME REANNOTATION</scope>
    <source>
        <strain>cv. Columbia</strain>
    </source>
</reference>
<reference key="3">
    <citation type="journal article" date="2003" name="Science">
        <title>Empirical analysis of transcriptional activity in the Arabidopsis genome.</title>
        <authorList>
            <person name="Yamada K."/>
            <person name="Lim J."/>
            <person name="Dale J.M."/>
            <person name="Chen H."/>
            <person name="Shinn P."/>
            <person name="Palm C.J."/>
            <person name="Southwick A.M."/>
            <person name="Wu H.C."/>
            <person name="Kim C.J."/>
            <person name="Nguyen M."/>
            <person name="Pham P.K."/>
            <person name="Cheuk R.F."/>
            <person name="Karlin-Newmann G."/>
            <person name="Liu S.X."/>
            <person name="Lam B."/>
            <person name="Sakano H."/>
            <person name="Wu T."/>
            <person name="Yu G."/>
            <person name="Miranda M."/>
            <person name="Quach H.L."/>
            <person name="Tripp M."/>
            <person name="Chang C.H."/>
            <person name="Lee J.M."/>
            <person name="Toriumi M.J."/>
            <person name="Chan M.M."/>
            <person name="Tang C.C."/>
            <person name="Onodera C.S."/>
            <person name="Deng J.M."/>
            <person name="Akiyama K."/>
            <person name="Ansari Y."/>
            <person name="Arakawa T."/>
            <person name="Banh J."/>
            <person name="Banno F."/>
            <person name="Bowser L."/>
            <person name="Brooks S.Y."/>
            <person name="Carninci P."/>
            <person name="Chao Q."/>
            <person name="Choy N."/>
            <person name="Enju A."/>
            <person name="Goldsmith A.D."/>
            <person name="Gurjal M."/>
            <person name="Hansen N.F."/>
            <person name="Hayashizaki Y."/>
            <person name="Johnson-Hopson C."/>
            <person name="Hsuan V.W."/>
            <person name="Iida K."/>
            <person name="Karnes M."/>
            <person name="Khan S."/>
            <person name="Koesema E."/>
            <person name="Ishida J."/>
            <person name="Jiang P.X."/>
            <person name="Jones T."/>
            <person name="Kawai J."/>
            <person name="Kamiya A."/>
            <person name="Meyers C."/>
            <person name="Nakajima M."/>
            <person name="Narusaka M."/>
            <person name="Seki M."/>
            <person name="Sakurai T."/>
            <person name="Satou M."/>
            <person name="Tamse R."/>
            <person name="Vaysberg M."/>
            <person name="Wallender E.K."/>
            <person name="Wong C."/>
            <person name="Yamamura Y."/>
            <person name="Yuan S."/>
            <person name="Shinozaki K."/>
            <person name="Davis R.W."/>
            <person name="Theologis A."/>
            <person name="Ecker J.R."/>
        </authorList>
    </citation>
    <scope>NUCLEOTIDE SEQUENCE [LARGE SCALE MRNA]</scope>
    <source>
        <strain>cv. Columbia</strain>
    </source>
</reference>
<reference key="4">
    <citation type="journal article" date="2005" name="BMC Evol. Biol.">
        <title>Genome-wide comparative analysis of the IQD gene families in Arabidopsis thaliana and Oryza sativa.</title>
        <authorList>
            <person name="Abel S."/>
            <person name="Savchenko T."/>
            <person name="Levy M."/>
        </authorList>
    </citation>
    <scope>INTERACTION WITH CALMODULIN</scope>
    <scope>GENE FAMILY</scope>
    <scope>NOMENCLATURE</scope>
    <source>
        <strain>cv. Columbia</strain>
    </source>
</reference>
<reference key="5">
    <citation type="journal article" date="2017" name="Curr. Biol.">
        <title>A novel plasma membrane-anchored protein regulates xylem cell-wall deposition through microtubule-dependent lateral inhibition of Rho GTPase domains.</title>
        <authorList>
            <person name="Sugiyama Y."/>
            <person name="Wakazaki M."/>
            <person name="Toyooka K."/>
            <person name="Fukuda H."/>
            <person name="Oda Y."/>
        </authorList>
    </citation>
    <scope>FUNCTION</scope>
    <scope>DISRUPTION PHENOTYPE</scope>
    <scope>SUBCELLULAR LOCATION</scope>
    <scope>TISSUE SPECIFICITY</scope>
    <scope>DEVELOPMENTAL STAGE</scope>
    <source>
        <strain>cv. Columbia</strain>
    </source>
</reference>
<reference key="6">
    <citation type="journal article" date="2017" name="Plant Physiol.">
        <title>The IQD family of calmodulin-binding proteins links calcium signaling to microtubules, membrane subdomains, and the nucleus.</title>
        <authorList>
            <person name="Buerstenbinder K."/>
            <person name="Moeller B."/>
            <person name="Ploetner R."/>
            <person name="Stamm G."/>
            <person name="Hause G."/>
            <person name="Mitra D."/>
            <person name="Abel S."/>
        </authorList>
    </citation>
    <scope>SUBCELLULAR LOCATION</scope>
    <scope>INTERACTION WITH CALMODULIN</scope>
    <source>
        <strain>cv. Columbia</strain>
    </source>
</reference>
<reference key="7">
    <citation type="journal article" date="2017" name="Plant Signal. Behav.">
        <title>Functions of IQD proteins as hubs in cellular calcium and auxin signaling: A toolbox for shape formation and tissue-specification in plants?</title>
        <authorList>
            <person name="Buerstenbinder K."/>
            <person name="Mitra D."/>
            <person name="Quegwer J."/>
        </authorList>
    </citation>
    <scope>REVIEW</scope>
</reference>
<proteinExistence type="evidence at protein level"/>